<organism>
    <name type="scientific">Mustela putorius furo</name>
    <name type="common">European domestic ferret</name>
    <name type="synonym">Mustela furo</name>
    <dbReference type="NCBI Taxonomy" id="9669"/>
    <lineage>
        <taxon>Eukaryota</taxon>
        <taxon>Metazoa</taxon>
        <taxon>Chordata</taxon>
        <taxon>Craniata</taxon>
        <taxon>Vertebrata</taxon>
        <taxon>Euteleostomi</taxon>
        <taxon>Mammalia</taxon>
        <taxon>Eutheria</taxon>
        <taxon>Laurasiatheria</taxon>
        <taxon>Carnivora</taxon>
        <taxon>Caniformia</taxon>
        <taxon>Musteloidea</taxon>
        <taxon>Mustelidae</taxon>
        <taxon>Mustelinae</taxon>
        <taxon>Mustela</taxon>
    </lineage>
</organism>
<comment type="function">
    <text evidence="1 3">Its primary physiological function is unclear. Has cytoprotective activity against internal or environmental stresses. May play a role in neuronal development and synaptic plasticity. May be required for neuronal myelin sheath maintenance. May play a role in iron uptake and iron homeostasis. Soluble oligomers are toxic to cultured neuroblastoma cells and induce apoptosis (in vitro). Association with GPC1 (via its heparan sulfate chains) targets PRNP to lipid rafts. Also provides Cu(2+) or Zn(2+) for the ascorbate-mediated GPC1 deaminase degradation of its heparan sulfate side chains (By similarity).</text>
</comment>
<comment type="subunit">
    <text evidence="1 3">Monomer and homodimer. Has a tendency to aggregate into amyloid fibrils containing a cross-beta spine, formed by a steric zipper of superposed beta-strands. Soluble oligomers may represent an intermediate stage on the path to fibril formation. Copper binding may promote oligomerization. Interacts with GRB2, APP, ERI3/PRNPIP and SYN1. Mislocalized cytosolically exposed PrP interacts with MGRN1; this interaction alters MGRN1 subcellular location and causes lysosomal enlargement. Interacts with KIAA1191.</text>
</comment>
<comment type="subcellular location">
    <subcellularLocation>
        <location evidence="1">Cell membrane</location>
        <topology evidence="1">Lipid-anchor</topology>
        <topology evidence="1">GPI-anchor</topology>
    </subcellularLocation>
    <subcellularLocation>
        <location evidence="3">Golgi apparatus</location>
    </subcellularLocation>
    <text evidence="1">Targeted to lipid rafts via association with the heparan sulfate chains of GPC1. Colocates, in the presence of Cu(2+), to vesicles in para- and perinuclear regions, where both proteins undergo internalization. Heparin displaces PRNP from lipid rafts and promotes endocytosis.</text>
</comment>
<comment type="domain">
    <text evidence="1">The normal, monomeric form has a mainly alpha-helical structure. The disease-associated, protease-resistant form forms amyloid fibrils containing a cross-beta spine, formed by a steric zipper of superposed beta-strands. Disease mutations may favor intermolecular contacts via short beta strands, and may thereby trigger oligomerization.</text>
</comment>
<comment type="domain">
    <text evidence="1">Contains an N-terminal region composed of octamer repeats. At low copper concentrations, the sidechains of His residues from three or four repeats contribute to the binding of a single copper ion. Alternatively, a copper ion can be bound by interaction with the sidechain and backbone amide nitrogen of a single His residue. The observed copper binding stoichiometry suggests that two repeat regions cooperate to stabilize the binding of a single copper ion. At higher copper concentrations, each octamer can bind one copper ion by interactions with the His sidechain and Gly backbone atoms. A mixture of binding types may occur, especially in the case of octamer repeat expansion. Copper binding may stabilize the conformation of this region and may promote oligomerization.</text>
</comment>
<comment type="disease">
    <text evidence="6">Found in high quantity in the brain of humans and animals infected with degenerative neurological diseases such as kuru, Creutzfeldt-Jakob disease (CJD), Gerstmann-Straussler syndrome (GSS), scrapie, bovine spongiform encephalopathy (BSE), transmissible mink encephalopathy (TME), etc.</text>
</comment>
<comment type="similarity">
    <text evidence="6">Belongs to the prion family.</text>
</comment>
<protein>
    <recommendedName>
        <fullName>Major prion protein</fullName>
        <shortName>PrP</shortName>
    </recommendedName>
    <alternativeName>
        <fullName>PrP27-30</fullName>
    </alternativeName>
    <alternativeName>
        <fullName>PrP33-35C</fullName>
    </alternativeName>
    <cdAntigenName>CD230</cdAntigenName>
</protein>
<name>PRIO_MUSPF</name>
<evidence type="ECO:0000250" key="1">
    <source>
        <dbReference type="UniProtKB" id="P04156"/>
    </source>
</evidence>
<evidence type="ECO:0000250" key="2">
    <source>
        <dbReference type="UniProtKB" id="P04273"/>
    </source>
</evidence>
<evidence type="ECO:0000250" key="3">
    <source>
        <dbReference type="UniProtKB" id="P04925"/>
    </source>
</evidence>
<evidence type="ECO:0000255" key="4"/>
<evidence type="ECO:0000256" key="5">
    <source>
        <dbReference type="SAM" id="MobiDB-lite"/>
    </source>
</evidence>
<evidence type="ECO:0000305" key="6"/>
<dbReference type="EMBL" id="U08952">
    <property type="protein sequence ID" value="AAA69022.1"/>
    <property type="molecule type" value="Genomic_DNA"/>
</dbReference>
<dbReference type="SMR" id="P52114"/>
<dbReference type="STRING" id="9669.ENSMPUP00000019010"/>
<dbReference type="GlyCosmos" id="P52114">
    <property type="glycosylation" value="2 sites, No reported glycans"/>
</dbReference>
<dbReference type="eggNOG" id="ENOG502S2A8">
    <property type="taxonomic scope" value="Eukaryota"/>
</dbReference>
<dbReference type="InParanoid" id="P52114"/>
<dbReference type="Proteomes" id="UP000000715">
    <property type="component" value="Unplaced"/>
</dbReference>
<dbReference type="GO" id="GO:0005794">
    <property type="term" value="C:Golgi apparatus"/>
    <property type="evidence" value="ECO:0007669"/>
    <property type="project" value="UniProtKB-SubCell"/>
</dbReference>
<dbReference type="GO" id="GO:0005886">
    <property type="term" value="C:plasma membrane"/>
    <property type="evidence" value="ECO:0007669"/>
    <property type="project" value="UniProtKB-SubCell"/>
</dbReference>
<dbReference type="GO" id="GO:0098552">
    <property type="term" value="C:side of membrane"/>
    <property type="evidence" value="ECO:0007669"/>
    <property type="project" value="UniProtKB-KW"/>
</dbReference>
<dbReference type="GO" id="GO:0005507">
    <property type="term" value="F:copper ion binding"/>
    <property type="evidence" value="ECO:0000250"/>
    <property type="project" value="UniProtKB"/>
</dbReference>
<dbReference type="GO" id="GO:0051260">
    <property type="term" value="P:protein homooligomerization"/>
    <property type="evidence" value="ECO:0007669"/>
    <property type="project" value="InterPro"/>
</dbReference>
<dbReference type="FunFam" id="1.10.790.10:FF:000001">
    <property type="entry name" value="Major prion protein"/>
    <property type="match status" value="1"/>
</dbReference>
<dbReference type="Gene3D" id="1.10.790.10">
    <property type="entry name" value="Prion/Doppel protein, beta-ribbon domain"/>
    <property type="match status" value="1"/>
</dbReference>
<dbReference type="InterPro" id="IPR000817">
    <property type="entry name" value="Prion"/>
</dbReference>
<dbReference type="InterPro" id="IPR036924">
    <property type="entry name" value="Prion/Doppel_b-ribbon_dom_sf"/>
</dbReference>
<dbReference type="InterPro" id="IPR022416">
    <property type="entry name" value="Prion/Doppel_prot_b-ribbon_dom"/>
</dbReference>
<dbReference type="InterPro" id="IPR020949">
    <property type="entry name" value="Prion_copper_b_octapeptide"/>
</dbReference>
<dbReference type="InterPro" id="IPR025860">
    <property type="entry name" value="Prion_N"/>
</dbReference>
<dbReference type="PANTHER" id="PTHR15506">
    <property type="entry name" value="DOPPEL PRION"/>
    <property type="match status" value="1"/>
</dbReference>
<dbReference type="PANTHER" id="PTHR15506:SF3">
    <property type="entry name" value="MAJOR PRION PROTEIN"/>
    <property type="match status" value="1"/>
</dbReference>
<dbReference type="Pfam" id="PF00377">
    <property type="entry name" value="Prion"/>
    <property type="match status" value="1"/>
</dbReference>
<dbReference type="Pfam" id="PF11587">
    <property type="entry name" value="Prion_bPrPp"/>
    <property type="match status" value="1"/>
</dbReference>
<dbReference type="Pfam" id="PF03991">
    <property type="entry name" value="Prion_octapep"/>
    <property type="match status" value="1"/>
</dbReference>
<dbReference type="PRINTS" id="PR00341">
    <property type="entry name" value="PRION"/>
</dbReference>
<dbReference type="SMART" id="SM00157">
    <property type="entry name" value="PRP"/>
    <property type="match status" value="1"/>
</dbReference>
<dbReference type="SUPFAM" id="SSF54098">
    <property type="entry name" value="Prion-like"/>
    <property type="match status" value="1"/>
</dbReference>
<dbReference type="PROSITE" id="PS00291">
    <property type="entry name" value="PRION_1"/>
    <property type="match status" value="1"/>
</dbReference>
<dbReference type="PROSITE" id="PS00706">
    <property type="entry name" value="PRION_2"/>
    <property type="match status" value="1"/>
</dbReference>
<sequence>MVKSHIGSWLLVLFVATWSDIGFCKKRPKPGGGWNTGGSRYPGQGSPGGNRYPPQGGGGWGQPHGGGWGQPHGGGWGQPHGGGWGQPHGGGGWGQGGGSHGQWGKPSKPKTNMKHVAGAAAAGAVVGGLGGYMLGSAMSRPLIHFGNDYEDRYYRENMYRYPNQVYYKPVDQYSNQNNLVHDCVNITVKQHTVTTTTKGENFTETDMKIMERVVEQMCVTQYQQESEAYYQRGASAILFSPPPVILLISLLILLIVG</sequence>
<accession>P52114</accession>
<gene>
    <name type="primary">PRNP</name>
    <name type="synonym">PRP</name>
</gene>
<keyword id="KW-0034">Amyloid</keyword>
<keyword id="KW-1003">Cell membrane</keyword>
<keyword id="KW-0186">Copper</keyword>
<keyword id="KW-1015">Disulfide bond</keyword>
<keyword id="KW-0325">Glycoprotein</keyword>
<keyword id="KW-0333">Golgi apparatus</keyword>
<keyword id="KW-0336">GPI-anchor</keyword>
<keyword id="KW-0449">Lipoprotein</keyword>
<keyword id="KW-0472">Membrane</keyword>
<keyword id="KW-0479">Metal-binding</keyword>
<keyword id="KW-0640">Prion</keyword>
<keyword id="KW-1185">Reference proteome</keyword>
<keyword id="KW-0677">Repeat</keyword>
<keyword id="KW-0732">Signal</keyword>
<keyword id="KW-0862">Zinc</keyword>
<reference key="1">
    <citation type="journal article" date="1994" name="J. Gen. Virol.">
        <title>Transmissible mink encephalopathy species barrier effect between ferret and mink: PrP gene and protein analysis.</title>
        <authorList>
            <person name="Bartz J.C."/>
            <person name="McKenzie D.I."/>
            <person name="Bessen R.A."/>
            <person name="Marsh R.F."/>
            <person name="Aiken J.M."/>
        </authorList>
    </citation>
    <scope>NUCLEOTIDE SEQUENCE [GENOMIC DNA]</scope>
    <source>
        <tissue>Brain</tissue>
    </source>
</reference>
<feature type="signal peptide" evidence="4">
    <location>
        <begin position="1"/>
        <end position="24"/>
    </location>
</feature>
<feature type="chain" id="PRO_0000025699" description="Major prion protein">
    <location>
        <begin position="25"/>
        <end position="234"/>
    </location>
</feature>
<feature type="propeptide" id="PRO_0000025700" description="Removed in mature form" evidence="4">
    <location>
        <begin position="235"/>
        <end position="257"/>
    </location>
</feature>
<feature type="repeat" description="1">
    <location>
        <begin position="54"/>
        <end position="62"/>
    </location>
</feature>
<feature type="repeat" description="2">
    <location>
        <begin position="63"/>
        <end position="70"/>
    </location>
</feature>
<feature type="repeat" description="3">
    <location>
        <begin position="71"/>
        <end position="78"/>
    </location>
</feature>
<feature type="repeat" description="4">
    <location>
        <begin position="79"/>
        <end position="86"/>
    </location>
</feature>
<feature type="repeat" description="5">
    <location>
        <begin position="87"/>
        <end position="95"/>
    </location>
</feature>
<feature type="region of interest" description="Interaction with GRB2, ERI3 and SYN1" evidence="3">
    <location>
        <begin position="25"/>
        <end position="234"/>
    </location>
</feature>
<feature type="region of interest" description="Disordered" evidence="5">
    <location>
        <begin position="27"/>
        <end position="114"/>
    </location>
</feature>
<feature type="region of interest" description="5 X 8 AA tandem repeats of P-H-G-G-G-W-G-Q">
    <location>
        <begin position="54"/>
        <end position="95"/>
    </location>
</feature>
<feature type="compositionally biased region" description="Gly residues" evidence="5">
    <location>
        <begin position="55"/>
        <end position="101"/>
    </location>
</feature>
<feature type="binding site" evidence="1">
    <location>
        <position position="64"/>
    </location>
    <ligand>
        <name>Cu(2+)</name>
        <dbReference type="ChEBI" id="CHEBI:29036"/>
        <label>1</label>
    </ligand>
</feature>
<feature type="binding site" evidence="1">
    <location>
        <position position="65"/>
    </location>
    <ligand>
        <name>Cu(2+)</name>
        <dbReference type="ChEBI" id="CHEBI:29036"/>
        <label>1</label>
    </ligand>
</feature>
<feature type="binding site" evidence="1">
    <location>
        <position position="66"/>
    </location>
    <ligand>
        <name>Cu(2+)</name>
        <dbReference type="ChEBI" id="CHEBI:29036"/>
        <label>1</label>
    </ligand>
</feature>
<feature type="binding site" evidence="1">
    <location>
        <position position="72"/>
    </location>
    <ligand>
        <name>Cu(2+)</name>
        <dbReference type="ChEBI" id="CHEBI:29036"/>
        <label>2</label>
    </ligand>
</feature>
<feature type="binding site" evidence="1">
    <location>
        <position position="73"/>
    </location>
    <ligand>
        <name>Cu(2+)</name>
        <dbReference type="ChEBI" id="CHEBI:29036"/>
        <label>2</label>
    </ligand>
</feature>
<feature type="binding site" evidence="1">
    <location>
        <position position="74"/>
    </location>
    <ligand>
        <name>Cu(2+)</name>
        <dbReference type="ChEBI" id="CHEBI:29036"/>
        <label>2</label>
    </ligand>
</feature>
<feature type="binding site" evidence="1">
    <location>
        <position position="80"/>
    </location>
    <ligand>
        <name>Cu(2+)</name>
        <dbReference type="ChEBI" id="CHEBI:29036"/>
        <label>3</label>
    </ligand>
</feature>
<feature type="binding site" evidence="1">
    <location>
        <position position="81"/>
    </location>
    <ligand>
        <name>Cu(2+)</name>
        <dbReference type="ChEBI" id="CHEBI:29036"/>
        <label>3</label>
    </ligand>
</feature>
<feature type="binding site" evidence="1">
    <location>
        <position position="82"/>
    </location>
    <ligand>
        <name>Cu(2+)</name>
        <dbReference type="ChEBI" id="CHEBI:29036"/>
        <label>3</label>
    </ligand>
</feature>
<feature type="binding site" evidence="1">
    <location>
        <position position="88"/>
    </location>
    <ligand>
        <name>Cu(2+)</name>
        <dbReference type="ChEBI" id="CHEBI:29036"/>
        <label>4</label>
    </ligand>
</feature>
<feature type="binding site" evidence="1">
    <location>
        <position position="90"/>
    </location>
    <ligand>
        <name>Cu(2+)</name>
        <dbReference type="ChEBI" id="CHEBI:29036"/>
        <label>4</label>
    </ligand>
</feature>
<feature type="binding site" evidence="1">
    <location>
        <position position="91"/>
    </location>
    <ligand>
        <name>Cu(2+)</name>
        <dbReference type="ChEBI" id="CHEBI:29036"/>
        <label>4</label>
    </ligand>
</feature>
<feature type="lipid moiety-binding region" description="GPI-anchor amidated alanine" evidence="4">
    <location>
        <position position="234"/>
    </location>
</feature>
<feature type="glycosylation site" description="N-linked (GlcNAc...) asparagine" evidence="4">
    <location>
        <position position="185"/>
    </location>
</feature>
<feature type="glycosylation site" description="N-linked (GlcNAc...) asparagine" evidence="4">
    <location>
        <position position="201"/>
    </location>
</feature>
<feature type="disulfide bond" evidence="2">
    <location>
        <begin position="183"/>
        <end position="218"/>
    </location>
</feature>
<proteinExistence type="inferred from homology"/>